<feature type="chain" id="PRO_0000124493" description="Small ribosomal subunit protein uS7c">
    <location>
        <begin position="1"/>
        <end position="156"/>
    </location>
</feature>
<sequence length="156" mass="18000">MSRRNTAKKRFASPDPLYKSRLVSMLTVRILKSGKKTLAQRIIYQALDIVKERTETDPLNVLEKAIRNITPLVEVKARRVGGSTYQVPIEVRAYRGTNLALRWITRFSRERSGKSMSMKLANEIMDAANETGNSIRKREETHRMAEANKAFAHYRY</sequence>
<gene>
    <name type="primary">rps7</name>
</gene>
<reference key="1">
    <citation type="journal article" date="1995" name="Plant Mol. Biol. Rep.">
        <title>Complete nucleotide sequence of the Porphyra purpurea chloroplast genome.</title>
        <authorList>
            <person name="Reith M.E."/>
            <person name="Munholland J."/>
        </authorList>
    </citation>
    <scope>NUCLEOTIDE SEQUENCE [LARGE SCALE GENOMIC DNA]</scope>
    <source>
        <strain>Avonport</strain>
    </source>
</reference>
<protein>
    <recommendedName>
        <fullName evidence="2">Small ribosomal subunit protein uS7c</fullName>
    </recommendedName>
    <alternativeName>
        <fullName>30S ribosomal protein S7, chloroplastic</fullName>
    </alternativeName>
</protein>
<comment type="function">
    <text evidence="1">One of the primary rRNA binding proteins, it binds directly to 16S rRNA where it nucleates assembly of the head domain of the 30S subunit.</text>
</comment>
<comment type="subunit">
    <text>Part of the 30S ribosomal subunit.</text>
</comment>
<comment type="subcellular location">
    <subcellularLocation>
        <location>Plastid</location>
        <location>Chloroplast</location>
    </subcellularLocation>
</comment>
<comment type="similarity">
    <text evidence="2">Belongs to the universal ribosomal protein uS7 family.</text>
</comment>
<proteinExistence type="inferred from homology"/>
<keyword id="KW-0150">Chloroplast</keyword>
<keyword id="KW-0934">Plastid</keyword>
<keyword id="KW-0687">Ribonucleoprotein</keyword>
<keyword id="KW-0689">Ribosomal protein</keyword>
<keyword id="KW-0694">RNA-binding</keyword>
<keyword id="KW-0699">rRNA-binding</keyword>
<accession>P51288</accession>
<name>RR7_PORPU</name>
<evidence type="ECO:0000250" key="1"/>
<evidence type="ECO:0000305" key="2"/>
<organism>
    <name type="scientific">Porphyra purpurea</name>
    <name type="common">Red seaweed</name>
    <name type="synonym">Ulva purpurea</name>
    <dbReference type="NCBI Taxonomy" id="2787"/>
    <lineage>
        <taxon>Eukaryota</taxon>
        <taxon>Rhodophyta</taxon>
        <taxon>Bangiophyceae</taxon>
        <taxon>Bangiales</taxon>
        <taxon>Bangiaceae</taxon>
        <taxon>Porphyra</taxon>
    </lineage>
</organism>
<geneLocation type="chloroplast"/>
<dbReference type="EMBL" id="U38804">
    <property type="protein sequence ID" value="AAC08174.1"/>
    <property type="molecule type" value="Genomic_DNA"/>
</dbReference>
<dbReference type="PIR" id="S73209">
    <property type="entry name" value="S73209"/>
</dbReference>
<dbReference type="RefSeq" id="NP_053898.1">
    <property type="nucleotide sequence ID" value="NC_000925.1"/>
</dbReference>
<dbReference type="SMR" id="P51288"/>
<dbReference type="GeneID" id="809917"/>
<dbReference type="GO" id="GO:0009507">
    <property type="term" value="C:chloroplast"/>
    <property type="evidence" value="ECO:0007669"/>
    <property type="project" value="UniProtKB-SubCell"/>
</dbReference>
<dbReference type="GO" id="GO:0015935">
    <property type="term" value="C:small ribosomal subunit"/>
    <property type="evidence" value="ECO:0007669"/>
    <property type="project" value="InterPro"/>
</dbReference>
<dbReference type="GO" id="GO:0019843">
    <property type="term" value="F:rRNA binding"/>
    <property type="evidence" value="ECO:0007669"/>
    <property type="project" value="UniProtKB-UniRule"/>
</dbReference>
<dbReference type="GO" id="GO:0003735">
    <property type="term" value="F:structural constituent of ribosome"/>
    <property type="evidence" value="ECO:0007669"/>
    <property type="project" value="InterPro"/>
</dbReference>
<dbReference type="GO" id="GO:0006412">
    <property type="term" value="P:translation"/>
    <property type="evidence" value="ECO:0007669"/>
    <property type="project" value="UniProtKB-UniRule"/>
</dbReference>
<dbReference type="CDD" id="cd14871">
    <property type="entry name" value="uS7_Chloroplast"/>
    <property type="match status" value="1"/>
</dbReference>
<dbReference type="FunFam" id="1.10.455.10:FF:000001">
    <property type="entry name" value="30S ribosomal protein S7"/>
    <property type="match status" value="1"/>
</dbReference>
<dbReference type="Gene3D" id="1.10.455.10">
    <property type="entry name" value="Ribosomal protein S7 domain"/>
    <property type="match status" value="1"/>
</dbReference>
<dbReference type="HAMAP" id="MF_00480_B">
    <property type="entry name" value="Ribosomal_uS7_B"/>
    <property type="match status" value="1"/>
</dbReference>
<dbReference type="InterPro" id="IPR000235">
    <property type="entry name" value="Ribosomal_uS7"/>
</dbReference>
<dbReference type="InterPro" id="IPR005717">
    <property type="entry name" value="Ribosomal_uS7_bac/org-type"/>
</dbReference>
<dbReference type="InterPro" id="IPR020606">
    <property type="entry name" value="Ribosomal_uS7_CS"/>
</dbReference>
<dbReference type="InterPro" id="IPR023798">
    <property type="entry name" value="Ribosomal_uS7_dom"/>
</dbReference>
<dbReference type="InterPro" id="IPR036823">
    <property type="entry name" value="Ribosomal_uS7_dom_sf"/>
</dbReference>
<dbReference type="NCBIfam" id="TIGR01029">
    <property type="entry name" value="rpsG_bact"/>
    <property type="match status" value="1"/>
</dbReference>
<dbReference type="PANTHER" id="PTHR11205">
    <property type="entry name" value="RIBOSOMAL PROTEIN S7"/>
    <property type="match status" value="1"/>
</dbReference>
<dbReference type="Pfam" id="PF00177">
    <property type="entry name" value="Ribosomal_S7"/>
    <property type="match status" value="1"/>
</dbReference>
<dbReference type="PIRSF" id="PIRSF002122">
    <property type="entry name" value="RPS7p_RPS7a_RPS5e_RPS7o"/>
    <property type="match status" value="1"/>
</dbReference>
<dbReference type="SUPFAM" id="SSF47973">
    <property type="entry name" value="Ribosomal protein S7"/>
    <property type="match status" value="1"/>
</dbReference>
<dbReference type="PROSITE" id="PS00052">
    <property type="entry name" value="RIBOSOMAL_S7"/>
    <property type="match status" value="1"/>
</dbReference>